<protein>
    <recommendedName>
        <fullName evidence="12">Protein THEMIS2</fullName>
    </recommendedName>
    <alternativeName>
        <fullName evidence="10">Induced by contact to basement membrane 1 protein</fullName>
        <shortName>Protein ICB-1</shortName>
    </alternativeName>
    <alternativeName>
        <fullName>Thymocyte-expressed molecule involved in selection protein 2</fullName>
    </alternativeName>
</protein>
<comment type="function">
    <text evidence="1 4">May constitute a control point in macrophage inflammatory response, promoting LPS-induced TLR4-mediated TNF production (PubMed:20644716). Determines the threshold for activation of B cells by low-affinity and low-avidity ligands via PLCG2 activation and its downstream pathways (By similarity).</text>
</comment>
<comment type="subunit">
    <text evidence="1">Interacts with VAV1. Interacts with LAT. Interacts constitutively with GRB2, LYN and PLCG2; these interactions increase the activation of PLCG2 and its downstream pathways following B cell receptor stimulation.</text>
</comment>
<comment type="interaction">
    <interactant intactId="EBI-2806032">
        <id>Q5TEJ8</id>
    </interactant>
    <interactant intactId="EBI-945833">
        <id>Q7Z3S9</id>
        <label>NOTCH2NLA</label>
    </interactant>
    <organismsDiffer>false</organismsDiffer>
    <experiments>4</experiments>
</comment>
<comment type="subcellular location">
    <subcellularLocation>
        <location evidence="1">Nucleus</location>
    </subcellularLocation>
    <subcellularLocation>
        <location evidence="1">Cytoplasm</location>
    </subcellularLocation>
</comment>
<comment type="alternative products">
    <event type="alternative splicing"/>
    <isoform>
        <id>Q5TEJ8-1</id>
        <name>1</name>
        <sequence type="displayed"/>
    </isoform>
    <isoform>
        <id>Q5TEJ8-2</id>
        <name>2</name>
        <name>ICB1-beta</name>
        <sequence type="described" ref="VSP_015326 VSP_015327"/>
    </isoform>
    <isoform>
        <id>Q5TEJ8-3</id>
        <name>3</name>
        <name>ICB1-gamma</name>
        <sequence type="described" ref="VSP_015330"/>
    </isoform>
    <isoform>
        <id>Q5TEJ8-4</id>
        <name>4</name>
        <sequence type="described" ref="VSP_015328 VSP_015329"/>
    </isoform>
    <isoform>
        <id>Q5TEJ8-5</id>
        <name>5</name>
        <sequence type="described" ref="VSP_037967"/>
    </isoform>
    <isoform>
        <id>Q5TEJ8-6</id>
        <name>6</name>
        <sequence type="described" ref="VSP_037966"/>
    </isoform>
</comment>
<comment type="tissue specificity">
    <text evidence="5">Expressed in different endometrial adenocarcinoma cell lines and various other cell lines apart from the prostate cell line LNCaP and the ovarian cancer cell line BG1.</text>
</comment>
<comment type="induction">
    <text>By contact to a reconstituted basement membrane.</text>
</comment>
<comment type="PTM">
    <text evidence="1">Phosphorylation at Tyr-632 is induced by LPS. Phosphorylated by Src kinases (Lck or Fyn) following BCR engagement.</text>
</comment>
<comment type="similarity">
    <text evidence="12">Belongs to the themis family.</text>
</comment>
<comment type="sequence caution" evidence="12">
    <conflict type="frameshift">
        <sequence resource="EMBL-CDS" id="AAC16284"/>
    </conflict>
</comment>
<comment type="sequence caution" evidence="12">
    <conflict type="erroneous initiation">
        <sequence resource="EMBL-CDS" id="BAA96464"/>
    </conflict>
    <text>Truncated N-terminus.</text>
</comment>
<comment type="sequence caution" evidence="12">
    <conflict type="erroneous initiation">
        <sequence resource="EMBL-CDS" id="BAB33313"/>
    </conflict>
    <text>Truncated N-terminus.</text>
</comment>
<comment type="sequence caution" evidence="12">
    <conflict type="erroneous initiation">
        <sequence resource="EMBL-CDS" id="BAG64201"/>
    </conflict>
    <text>Truncated N-terminus.</text>
</comment>
<comment type="sequence caution" evidence="12">
    <conflict type="erroneous gene model prediction">
        <sequence resource="EMBL-CDS" id="CAI21769"/>
    </conflict>
</comment>
<comment type="sequence caution" evidence="12">
    <conflict type="erroneous gene model prediction">
        <sequence resource="EMBL-CDS" id="CAI21771"/>
    </conflict>
</comment>
<comment type="sequence caution" evidence="12">
    <conflict type="erroneous gene model prediction">
        <sequence resource="EMBL-CDS" id="CAI21773"/>
    </conflict>
</comment>
<sequence>MEPVPLQDFVRALDPASLPRVLRVCSGVYFEGSIYEISGNECCLSTGDLIKVTQVRLQKVVCENPKTSQTMELAPNFQGYFTPLNTPQSYETLEELVSATTQSSKQLPTCFMSTHRIVTEGRVVTEDQLLMLEAVVMHLGIRSARCVLGMEGQQVILHLPLSQKGPFWTWEPSAPRTLLQVLQDPALKDLVLTCPTLPWHSLILRPQYEIQAIMHMRRTIVKIPSTLEVDVEDVTASSRHVHFIKPLLLSEVLAWEGPFPLSMEILEVPEGRPIFLSPWVGSLQKGQRLCVYGLASPPWRVLASSKGRKVPRHFLVSGGYQGKLRRRPREFPTAYDLLGAFQPGRPLRVVATKDCEGEREENPEFTSLAVGDRLEVLGPGQAHGAQGSDVDVLVCQRLSDQAGEDEEEECKEEAESPERVLLPFHFPGSFVEEMSDSRRYSLADLTAQFSLPCEVKVVAKDTSHPTDPLTSFLGLRLEEKITEPFLVVSLDSEPGMCFEIPPRWLDLTVVKAKGQPDLPEGSLPIATVEELTDTFYYRLRKLPACEIQAPPPRPPKNQGLSKQRRHSSEGGVKSSQVLGLQQHARLPKPKAKTLPEFIKDGSSTYSKIPAHRKGHRPAKPQRQDLDDDEHDYEEILEQFQKTI</sequence>
<keyword id="KW-0025">Alternative splicing</keyword>
<keyword id="KW-0963">Cytoplasm</keyword>
<keyword id="KW-0391">Immunity</keyword>
<keyword id="KW-0395">Inflammatory response</keyword>
<keyword id="KW-0539">Nucleus</keyword>
<keyword id="KW-0597">Phosphoprotein</keyword>
<keyword id="KW-1267">Proteomics identification</keyword>
<keyword id="KW-1185">Reference proteome</keyword>
<name>THMS2_HUMAN</name>
<gene>
    <name evidence="13" type="primary">THEMIS2</name>
    <name type="synonym">C1orf38</name>
    <name evidence="10" type="synonym">ICB1</name>
</gene>
<organism>
    <name type="scientific">Homo sapiens</name>
    <name type="common">Human</name>
    <dbReference type="NCBI Taxonomy" id="9606"/>
    <lineage>
        <taxon>Eukaryota</taxon>
        <taxon>Metazoa</taxon>
        <taxon>Chordata</taxon>
        <taxon>Craniata</taxon>
        <taxon>Vertebrata</taxon>
        <taxon>Euteleostomi</taxon>
        <taxon>Mammalia</taxon>
        <taxon>Eutheria</taxon>
        <taxon>Euarchontoglires</taxon>
        <taxon>Primates</taxon>
        <taxon>Haplorrhini</taxon>
        <taxon>Catarrhini</taxon>
        <taxon>Hominidae</taxon>
        <taxon>Homo</taxon>
    </lineage>
</organism>
<dbReference type="EMBL" id="CR749321">
    <property type="protein sequence ID" value="CAH18176.1"/>
    <property type="molecule type" value="mRNA"/>
</dbReference>
<dbReference type="EMBL" id="AK303090">
    <property type="protein sequence ID" value="BAG64201.1"/>
    <property type="status" value="ALT_INIT"/>
    <property type="molecule type" value="mRNA"/>
</dbReference>
<dbReference type="EMBL" id="AK303141">
    <property type="protein sequence ID" value="BAG64245.1"/>
    <property type="molecule type" value="mRNA"/>
</dbReference>
<dbReference type="EMBL" id="AL109927">
    <property type="protein sequence ID" value="CAI21769.1"/>
    <property type="status" value="ALT_SEQ"/>
    <property type="molecule type" value="Genomic_DNA"/>
</dbReference>
<dbReference type="EMBL" id="AL109927">
    <property type="protein sequence ID" value="CAI21770.1"/>
    <property type="molecule type" value="Genomic_DNA"/>
</dbReference>
<dbReference type="EMBL" id="AL109927">
    <property type="protein sequence ID" value="CAI21771.1"/>
    <property type="status" value="ALT_SEQ"/>
    <property type="molecule type" value="Genomic_DNA"/>
</dbReference>
<dbReference type="EMBL" id="AL109927">
    <property type="protein sequence ID" value="CAI21772.1"/>
    <property type="molecule type" value="Genomic_DNA"/>
</dbReference>
<dbReference type="EMBL" id="AL109927">
    <property type="protein sequence ID" value="CAI21773.1"/>
    <property type="status" value="ALT_SEQ"/>
    <property type="molecule type" value="Genomic_DNA"/>
</dbReference>
<dbReference type="EMBL" id="BC031655">
    <property type="protein sequence ID" value="AAH31655.2"/>
    <property type="molecule type" value="mRNA"/>
</dbReference>
<dbReference type="EMBL" id="BC132692">
    <property type="protein sequence ID" value="AAI32693.1"/>
    <property type="molecule type" value="mRNA"/>
</dbReference>
<dbReference type="EMBL" id="BC133049">
    <property type="protein sequence ID" value="AAI33050.1"/>
    <property type="molecule type" value="mRNA"/>
</dbReference>
<dbReference type="EMBL" id="AF044895">
    <property type="protein sequence ID" value="AAC16284.1"/>
    <property type="status" value="ALT_FRAME"/>
    <property type="molecule type" value="mRNA"/>
</dbReference>
<dbReference type="EMBL" id="AB050854">
    <property type="protein sequence ID" value="BAB33313.1"/>
    <property type="status" value="ALT_INIT"/>
    <property type="molecule type" value="mRNA"/>
</dbReference>
<dbReference type="EMBL" id="AB035482">
    <property type="protein sequence ID" value="BAA96464.1"/>
    <property type="status" value="ALT_INIT"/>
    <property type="molecule type" value="mRNA"/>
</dbReference>
<dbReference type="CCDS" id="CCDS30653.1">
    <molecule id="Q5TEJ8-2"/>
</dbReference>
<dbReference type="CCDS" id="CCDS30654.1">
    <molecule id="Q5TEJ8-4"/>
</dbReference>
<dbReference type="CCDS" id="CCDS41290.1">
    <molecule id="Q5TEJ8-1"/>
</dbReference>
<dbReference type="CCDS" id="CCDS65461.1">
    <molecule id="Q5TEJ8-5"/>
</dbReference>
<dbReference type="RefSeq" id="NP_001034566.1">
    <molecule id="Q5TEJ8-4"/>
    <property type="nucleotide sequence ID" value="NM_001039477.3"/>
</dbReference>
<dbReference type="RefSeq" id="NP_001099026.1">
    <molecule id="Q5TEJ8-1"/>
    <property type="nucleotide sequence ID" value="NM_001105556.3"/>
</dbReference>
<dbReference type="RefSeq" id="NP_001273042.1">
    <molecule id="Q5TEJ8-5"/>
    <property type="nucleotide sequence ID" value="NM_001286113.2"/>
</dbReference>
<dbReference type="RefSeq" id="NP_001273044.1">
    <molecule id="Q5TEJ8-6"/>
    <property type="nucleotide sequence ID" value="NM_001286115.2"/>
</dbReference>
<dbReference type="RefSeq" id="NP_004839.2">
    <molecule id="Q5TEJ8-2"/>
    <property type="nucleotide sequence ID" value="NM_004848.4"/>
</dbReference>
<dbReference type="RefSeq" id="XP_006711113.1">
    <molecule id="Q5TEJ8-3"/>
    <property type="nucleotide sequence ID" value="XM_006711050.2"/>
</dbReference>
<dbReference type="BioGRID" id="114858">
    <property type="interactions" value="3"/>
</dbReference>
<dbReference type="FunCoup" id="Q5TEJ8">
    <property type="interactions" value="67"/>
</dbReference>
<dbReference type="IntAct" id="Q5TEJ8">
    <property type="interactions" value="9"/>
</dbReference>
<dbReference type="STRING" id="9606.ENSP00000363031"/>
<dbReference type="iPTMnet" id="Q5TEJ8"/>
<dbReference type="PhosphoSitePlus" id="Q5TEJ8"/>
<dbReference type="BioMuta" id="THEMIS2"/>
<dbReference type="DMDM" id="73920021"/>
<dbReference type="jPOST" id="Q5TEJ8"/>
<dbReference type="MassIVE" id="Q5TEJ8"/>
<dbReference type="PaxDb" id="9606-ENSP00000363031"/>
<dbReference type="PeptideAtlas" id="Q5TEJ8"/>
<dbReference type="ProteomicsDB" id="65054">
    <molecule id="Q5TEJ8-1"/>
</dbReference>
<dbReference type="ProteomicsDB" id="65055">
    <molecule id="Q5TEJ8-2"/>
</dbReference>
<dbReference type="ProteomicsDB" id="65056">
    <molecule id="Q5TEJ8-3"/>
</dbReference>
<dbReference type="ProteomicsDB" id="65057">
    <molecule id="Q5TEJ8-4"/>
</dbReference>
<dbReference type="ProteomicsDB" id="65058">
    <molecule id="Q5TEJ8-5"/>
</dbReference>
<dbReference type="ProteomicsDB" id="65059">
    <molecule id="Q5TEJ8-6"/>
</dbReference>
<dbReference type="Pumba" id="Q5TEJ8"/>
<dbReference type="Antibodypedia" id="30867">
    <property type="antibodies" value="106 antibodies from 21 providers"/>
</dbReference>
<dbReference type="DNASU" id="9473"/>
<dbReference type="Ensembl" id="ENST00000328928.11">
    <molecule id="Q5TEJ8-5"/>
    <property type="protein sequence ID" value="ENSP00000329862.7"/>
    <property type="gene ID" value="ENSG00000130775.16"/>
</dbReference>
<dbReference type="Ensembl" id="ENST00000373921.8">
    <molecule id="Q5TEJ8-1"/>
    <property type="protein sequence ID" value="ENSP00000363031.3"/>
    <property type="gene ID" value="ENSG00000130775.16"/>
</dbReference>
<dbReference type="Ensembl" id="ENST00000373925.5">
    <molecule id="Q5TEJ8-2"/>
    <property type="protein sequence ID" value="ENSP00000363035.1"/>
    <property type="gene ID" value="ENSG00000130775.16"/>
</dbReference>
<dbReference type="Ensembl" id="ENST00000373927.7">
    <molecule id="Q5TEJ8-4"/>
    <property type="protein sequence ID" value="ENSP00000363037.3"/>
    <property type="gene ID" value="ENSG00000130775.16"/>
</dbReference>
<dbReference type="GeneID" id="9473"/>
<dbReference type="KEGG" id="hsa:9473"/>
<dbReference type="MANE-Select" id="ENST00000373921.8">
    <property type="protein sequence ID" value="ENSP00000363031.3"/>
    <property type="RefSeq nucleotide sequence ID" value="NM_001105556.3"/>
    <property type="RefSeq protein sequence ID" value="NP_001099026.1"/>
</dbReference>
<dbReference type="UCSC" id="uc001boz.5">
    <molecule id="Q5TEJ8-1"/>
    <property type="organism name" value="human"/>
</dbReference>
<dbReference type="AGR" id="HGNC:16839"/>
<dbReference type="CTD" id="9473"/>
<dbReference type="DisGeNET" id="9473"/>
<dbReference type="GeneCards" id="THEMIS2"/>
<dbReference type="HGNC" id="HGNC:16839">
    <property type="gene designation" value="THEMIS2"/>
</dbReference>
<dbReference type="HPA" id="ENSG00000130775">
    <property type="expression patterns" value="Tissue enhanced (bone marrow, lymphoid tissue)"/>
</dbReference>
<dbReference type="MIM" id="617856">
    <property type="type" value="gene"/>
</dbReference>
<dbReference type="neXtProt" id="NX_Q5TEJ8"/>
<dbReference type="OpenTargets" id="ENSG00000130775"/>
<dbReference type="PharmGKB" id="PA128394550"/>
<dbReference type="VEuPathDB" id="HostDB:ENSG00000130775"/>
<dbReference type="eggNOG" id="ENOG502QSJR">
    <property type="taxonomic scope" value="Eukaryota"/>
</dbReference>
<dbReference type="GeneTree" id="ENSGT00530000063770"/>
<dbReference type="HOGENOM" id="CLU_1069427_0_0_1"/>
<dbReference type="InParanoid" id="Q5TEJ8"/>
<dbReference type="OMA" id="RPEYEVQ"/>
<dbReference type="OrthoDB" id="9030353at2759"/>
<dbReference type="PAN-GO" id="Q5TEJ8">
    <property type="GO annotations" value="3 GO annotations based on evolutionary models"/>
</dbReference>
<dbReference type="PhylomeDB" id="Q5TEJ8"/>
<dbReference type="TreeFam" id="TF333479"/>
<dbReference type="PathwayCommons" id="Q5TEJ8"/>
<dbReference type="SignaLink" id="Q5TEJ8"/>
<dbReference type="BioGRID-ORCS" id="9473">
    <property type="hits" value="18 hits in 1161 CRISPR screens"/>
</dbReference>
<dbReference type="ChiTaRS" id="THEMIS2">
    <property type="organism name" value="human"/>
</dbReference>
<dbReference type="GenomeRNAi" id="9473"/>
<dbReference type="Pharos" id="Q5TEJ8">
    <property type="development level" value="Tbio"/>
</dbReference>
<dbReference type="PRO" id="PR:Q5TEJ8"/>
<dbReference type="Proteomes" id="UP000005640">
    <property type="component" value="Chromosome 1"/>
</dbReference>
<dbReference type="RNAct" id="Q5TEJ8">
    <property type="molecule type" value="protein"/>
</dbReference>
<dbReference type="Bgee" id="ENSG00000130775">
    <property type="expression patterns" value="Expressed in monocyte and 160 other cell types or tissues"/>
</dbReference>
<dbReference type="ExpressionAtlas" id="Q5TEJ8">
    <property type="expression patterns" value="baseline and differential"/>
</dbReference>
<dbReference type="GO" id="GO:0005737">
    <property type="term" value="C:cytoplasm"/>
    <property type="evidence" value="ECO:0000318"/>
    <property type="project" value="GO_Central"/>
</dbReference>
<dbReference type="GO" id="GO:0005634">
    <property type="term" value="C:nucleus"/>
    <property type="evidence" value="ECO:0000318"/>
    <property type="project" value="GO_Central"/>
</dbReference>
<dbReference type="GO" id="GO:0007155">
    <property type="term" value="P:cell adhesion"/>
    <property type="evidence" value="ECO:0000304"/>
    <property type="project" value="ProtInc"/>
</dbReference>
<dbReference type="GO" id="GO:0006954">
    <property type="term" value="P:inflammatory response"/>
    <property type="evidence" value="ECO:0007669"/>
    <property type="project" value="UniProtKB-KW"/>
</dbReference>
<dbReference type="GO" id="GO:0050864">
    <property type="term" value="P:regulation of B cell activation"/>
    <property type="evidence" value="ECO:0000250"/>
    <property type="project" value="UniProtKB"/>
</dbReference>
<dbReference type="GO" id="GO:0050852">
    <property type="term" value="P:T cell receptor signaling pathway"/>
    <property type="evidence" value="ECO:0000318"/>
    <property type="project" value="GO_Central"/>
</dbReference>
<dbReference type="InterPro" id="IPR025946">
    <property type="entry name" value="CABIT_dom"/>
</dbReference>
<dbReference type="InterPro" id="IPR039671">
    <property type="entry name" value="THEMIS"/>
</dbReference>
<dbReference type="PANTHER" id="PTHR15215">
    <property type="entry name" value="CABIT DOMAIN-CONTAINING PROTEIN"/>
    <property type="match status" value="1"/>
</dbReference>
<dbReference type="PANTHER" id="PTHR15215:SF2">
    <property type="entry name" value="PROTEIN THEMIS2"/>
    <property type="match status" value="1"/>
</dbReference>
<dbReference type="Pfam" id="PF12736">
    <property type="entry name" value="CABIT"/>
    <property type="match status" value="2"/>
</dbReference>
<proteinExistence type="evidence at protein level"/>
<reference key="1">
    <citation type="journal article" date="2007" name="BMC Genomics">
        <title>The full-ORF clone resource of the German cDNA consortium.</title>
        <authorList>
            <person name="Bechtel S."/>
            <person name="Rosenfelder H."/>
            <person name="Duda A."/>
            <person name="Schmidt C.P."/>
            <person name="Ernst U."/>
            <person name="Wellenreuther R."/>
            <person name="Mehrle A."/>
            <person name="Schuster C."/>
            <person name="Bahr A."/>
            <person name="Bloecker H."/>
            <person name="Heubner D."/>
            <person name="Hoerlein A."/>
            <person name="Michel G."/>
            <person name="Wedler H."/>
            <person name="Koehrer K."/>
            <person name="Ottenwaelder B."/>
            <person name="Poustka A."/>
            <person name="Wiemann S."/>
            <person name="Schupp I."/>
        </authorList>
    </citation>
    <scope>NUCLEOTIDE SEQUENCE [LARGE SCALE MRNA] (ISOFORM 4)</scope>
    <source>
        <tissue>Testis</tissue>
    </source>
</reference>
<reference key="2">
    <citation type="journal article" date="2004" name="Nat. Genet.">
        <title>Complete sequencing and characterization of 21,243 full-length human cDNAs.</title>
        <authorList>
            <person name="Ota T."/>
            <person name="Suzuki Y."/>
            <person name="Nishikawa T."/>
            <person name="Otsuki T."/>
            <person name="Sugiyama T."/>
            <person name="Irie R."/>
            <person name="Wakamatsu A."/>
            <person name="Hayashi K."/>
            <person name="Sato H."/>
            <person name="Nagai K."/>
            <person name="Kimura K."/>
            <person name="Makita H."/>
            <person name="Sekine M."/>
            <person name="Obayashi M."/>
            <person name="Nishi T."/>
            <person name="Shibahara T."/>
            <person name="Tanaka T."/>
            <person name="Ishii S."/>
            <person name="Yamamoto J."/>
            <person name="Saito K."/>
            <person name="Kawai Y."/>
            <person name="Isono Y."/>
            <person name="Nakamura Y."/>
            <person name="Nagahari K."/>
            <person name="Murakami K."/>
            <person name="Yasuda T."/>
            <person name="Iwayanagi T."/>
            <person name="Wagatsuma M."/>
            <person name="Shiratori A."/>
            <person name="Sudo H."/>
            <person name="Hosoiri T."/>
            <person name="Kaku Y."/>
            <person name="Kodaira H."/>
            <person name="Kondo H."/>
            <person name="Sugawara M."/>
            <person name="Takahashi M."/>
            <person name="Kanda K."/>
            <person name="Yokoi T."/>
            <person name="Furuya T."/>
            <person name="Kikkawa E."/>
            <person name="Omura Y."/>
            <person name="Abe K."/>
            <person name="Kamihara K."/>
            <person name="Katsuta N."/>
            <person name="Sato K."/>
            <person name="Tanikawa M."/>
            <person name="Yamazaki M."/>
            <person name="Ninomiya K."/>
            <person name="Ishibashi T."/>
            <person name="Yamashita H."/>
            <person name="Murakawa K."/>
            <person name="Fujimori K."/>
            <person name="Tanai H."/>
            <person name="Kimata M."/>
            <person name="Watanabe M."/>
            <person name="Hiraoka S."/>
            <person name="Chiba Y."/>
            <person name="Ishida S."/>
            <person name="Ono Y."/>
            <person name="Takiguchi S."/>
            <person name="Watanabe S."/>
            <person name="Yosida M."/>
            <person name="Hotuta T."/>
            <person name="Kusano J."/>
            <person name="Kanehori K."/>
            <person name="Takahashi-Fujii A."/>
            <person name="Hara H."/>
            <person name="Tanase T.-O."/>
            <person name="Nomura Y."/>
            <person name="Togiya S."/>
            <person name="Komai F."/>
            <person name="Hara R."/>
            <person name="Takeuchi K."/>
            <person name="Arita M."/>
            <person name="Imose N."/>
            <person name="Musashino K."/>
            <person name="Yuuki H."/>
            <person name="Oshima A."/>
            <person name="Sasaki N."/>
            <person name="Aotsuka S."/>
            <person name="Yoshikawa Y."/>
            <person name="Matsunawa H."/>
            <person name="Ichihara T."/>
            <person name="Shiohata N."/>
            <person name="Sano S."/>
            <person name="Moriya S."/>
            <person name="Momiyama H."/>
            <person name="Satoh N."/>
            <person name="Takami S."/>
            <person name="Terashima Y."/>
            <person name="Suzuki O."/>
            <person name="Nakagawa S."/>
            <person name="Senoh A."/>
            <person name="Mizoguchi H."/>
            <person name="Goto Y."/>
            <person name="Shimizu F."/>
            <person name="Wakebe H."/>
            <person name="Hishigaki H."/>
            <person name="Watanabe T."/>
            <person name="Sugiyama A."/>
            <person name="Takemoto M."/>
            <person name="Kawakami B."/>
            <person name="Yamazaki M."/>
            <person name="Watanabe K."/>
            <person name="Kumagai A."/>
            <person name="Itakura S."/>
            <person name="Fukuzumi Y."/>
            <person name="Fujimori Y."/>
            <person name="Komiyama M."/>
            <person name="Tashiro H."/>
            <person name="Tanigami A."/>
            <person name="Fujiwara T."/>
            <person name="Ono T."/>
            <person name="Yamada K."/>
            <person name="Fujii Y."/>
            <person name="Ozaki K."/>
            <person name="Hirao M."/>
            <person name="Ohmori Y."/>
            <person name="Kawabata A."/>
            <person name="Hikiji T."/>
            <person name="Kobatake N."/>
            <person name="Inagaki H."/>
            <person name="Ikema Y."/>
            <person name="Okamoto S."/>
            <person name="Okitani R."/>
            <person name="Kawakami T."/>
            <person name="Noguchi S."/>
            <person name="Itoh T."/>
            <person name="Shigeta K."/>
            <person name="Senba T."/>
            <person name="Matsumura K."/>
            <person name="Nakajima Y."/>
            <person name="Mizuno T."/>
            <person name="Morinaga M."/>
            <person name="Sasaki M."/>
            <person name="Togashi T."/>
            <person name="Oyama M."/>
            <person name="Hata H."/>
            <person name="Watanabe M."/>
            <person name="Komatsu T."/>
            <person name="Mizushima-Sugano J."/>
            <person name="Satoh T."/>
            <person name="Shirai Y."/>
            <person name="Takahashi Y."/>
            <person name="Nakagawa K."/>
            <person name="Okumura K."/>
            <person name="Nagase T."/>
            <person name="Nomura N."/>
            <person name="Kikuchi H."/>
            <person name="Masuho Y."/>
            <person name="Yamashita R."/>
            <person name="Nakai K."/>
            <person name="Yada T."/>
            <person name="Nakamura Y."/>
            <person name="Ohara O."/>
            <person name="Isogai T."/>
            <person name="Sugano S."/>
        </authorList>
    </citation>
    <scope>NUCLEOTIDE SEQUENCE [LARGE SCALE MRNA] (ISOFORM 6)</scope>
    <scope>NUCLEOTIDE SEQUENCE [LARGE SCALE MRNA] OF 4-643 (ISOFORM 5)</scope>
    <scope>VARIANT GLU-511</scope>
    <source>
        <tissue>Thymus</tissue>
    </source>
</reference>
<reference key="3">
    <citation type="journal article" date="2006" name="Nature">
        <title>The DNA sequence and biological annotation of human chromosome 1.</title>
        <authorList>
            <person name="Gregory S.G."/>
            <person name="Barlow K.F."/>
            <person name="McLay K.E."/>
            <person name="Kaul R."/>
            <person name="Swarbreck D."/>
            <person name="Dunham A."/>
            <person name="Scott C.E."/>
            <person name="Howe K.L."/>
            <person name="Woodfine K."/>
            <person name="Spencer C.C.A."/>
            <person name="Jones M.C."/>
            <person name="Gillson C."/>
            <person name="Searle S."/>
            <person name="Zhou Y."/>
            <person name="Kokocinski F."/>
            <person name="McDonald L."/>
            <person name="Evans R."/>
            <person name="Phillips K."/>
            <person name="Atkinson A."/>
            <person name="Cooper R."/>
            <person name="Jones C."/>
            <person name="Hall R.E."/>
            <person name="Andrews T.D."/>
            <person name="Lloyd C."/>
            <person name="Ainscough R."/>
            <person name="Almeida J.P."/>
            <person name="Ambrose K.D."/>
            <person name="Anderson F."/>
            <person name="Andrew R.W."/>
            <person name="Ashwell R.I.S."/>
            <person name="Aubin K."/>
            <person name="Babbage A.K."/>
            <person name="Bagguley C.L."/>
            <person name="Bailey J."/>
            <person name="Beasley H."/>
            <person name="Bethel G."/>
            <person name="Bird C.P."/>
            <person name="Bray-Allen S."/>
            <person name="Brown J.Y."/>
            <person name="Brown A.J."/>
            <person name="Buckley D."/>
            <person name="Burton J."/>
            <person name="Bye J."/>
            <person name="Carder C."/>
            <person name="Chapman J.C."/>
            <person name="Clark S.Y."/>
            <person name="Clarke G."/>
            <person name="Clee C."/>
            <person name="Cobley V."/>
            <person name="Collier R.E."/>
            <person name="Corby N."/>
            <person name="Coville G.J."/>
            <person name="Davies J."/>
            <person name="Deadman R."/>
            <person name="Dunn M."/>
            <person name="Earthrowl M."/>
            <person name="Ellington A.G."/>
            <person name="Errington H."/>
            <person name="Frankish A."/>
            <person name="Frankland J."/>
            <person name="French L."/>
            <person name="Garner P."/>
            <person name="Garnett J."/>
            <person name="Gay L."/>
            <person name="Ghori M.R.J."/>
            <person name="Gibson R."/>
            <person name="Gilby L.M."/>
            <person name="Gillett W."/>
            <person name="Glithero R.J."/>
            <person name="Grafham D.V."/>
            <person name="Griffiths C."/>
            <person name="Griffiths-Jones S."/>
            <person name="Grocock R."/>
            <person name="Hammond S."/>
            <person name="Harrison E.S.I."/>
            <person name="Hart E."/>
            <person name="Haugen E."/>
            <person name="Heath P.D."/>
            <person name="Holmes S."/>
            <person name="Holt K."/>
            <person name="Howden P.J."/>
            <person name="Hunt A.R."/>
            <person name="Hunt S.E."/>
            <person name="Hunter G."/>
            <person name="Isherwood J."/>
            <person name="James R."/>
            <person name="Johnson C."/>
            <person name="Johnson D."/>
            <person name="Joy A."/>
            <person name="Kay M."/>
            <person name="Kershaw J.K."/>
            <person name="Kibukawa M."/>
            <person name="Kimberley A.M."/>
            <person name="King A."/>
            <person name="Knights A.J."/>
            <person name="Lad H."/>
            <person name="Laird G."/>
            <person name="Lawlor S."/>
            <person name="Leongamornlert D.A."/>
            <person name="Lloyd D.M."/>
            <person name="Loveland J."/>
            <person name="Lovell J."/>
            <person name="Lush M.J."/>
            <person name="Lyne R."/>
            <person name="Martin S."/>
            <person name="Mashreghi-Mohammadi M."/>
            <person name="Matthews L."/>
            <person name="Matthews N.S.W."/>
            <person name="McLaren S."/>
            <person name="Milne S."/>
            <person name="Mistry S."/>
            <person name="Moore M.J.F."/>
            <person name="Nickerson T."/>
            <person name="O'Dell C.N."/>
            <person name="Oliver K."/>
            <person name="Palmeiri A."/>
            <person name="Palmer S.A."/>
            <person name="Parker A."/>
            <person name="Patel D."/>
            <person name="Pearce A.V."/>
            <person name="Peck A.I."/>
            <person name="Pelan S."/>
            <person name="Phelps K."/>
            <person name="Phillimore B.J."/>
            <person name="Plumb R."/>
            <person name="Rajan J."/>
            <person name="Raymond C."/>
            <person name="Rouse G."/>
            <person name="Saenphimmachak C."/>
            <person name="Sehra H.K."/>
            <person name="Sheridan E."/>
            <person name="Shownkeen R."/>
            <person name="Sims S."/>
            <person name="Skuce C.D."/>
            <person name="Smith M."/>
            <person name="Steward C."/>
            <person name="Subramanian S."/>
            <person name="Sycamore N."/>
            <person name="Tracey A."/>
            <person name="Tromans A."/>
            <person name="Van Helmond Z."/>
            <person name="Wall M."/>
            <person name="Wallis J.M."/>
            <person name="White S."/>
            <person name="Whitehead S.L."/>
            <person name="Wilkinson J.E."/>
            <person name="Willey D.L."/>
            <person name="Williams H."/>
            <person name="Wilming L."/>
            <person name="Wray P.W."/>
            <person name="Wu Z."/>
            <person name="Coulson A."/>
            <person name="Vaudin M."/>
            <person name="Sulston J.E."/>
            <person name="Durbin R.M."/>
            <person name="Hubbard T."/>
            <person name="Wooster R."/>
            <person name="Dunham I."/>
            <person name="Carter N.P."/>
            <person name="McVean G."/>
            <person name="Ross M.T."/>
            <person name="Harrow J."/>
            <person name="Olson M.V."/>
            <person name="Beck S."/>
            <person name="Rogers J."/>
            <person name="Bentley D.R."/>
        </authorList>
    </citation>
    <scope>NUCLEOTIDE SEQUENCE [LARGE SCALE GENOMIC DNA]</scope>
</reference>
<reference key="4">
    <citation type="journal article" date="2004" name="Genome Res.">
        <title>The status, quality, and expansion of the NIH full-length cDNA project: the Mammalian Gene Collection (MGC).</title>
        <authorList>
            <consortium name="The MGC Project Team"/>
        </authorList>
    </citation>
    <scope>NUCLEOTIDE SEQUENCE [LARGE SCALE MRNA] (ISOFORM 2)</scope>
    <source>
        <tissue>Brain</tissue>
    </source>
</reference>
<reference key="5">
    <citation type="journal article" date="1998" name="FEBS Lett.">
        <title>A novel basement membrane-induced gene identified in the human endometrial adenocarcinoma cell line HEC1B.</title>
        <authorList>
            <person name="Treeck O."/>
            <person name="Strunck E."/>
            <person name="Vollmer G."/>
        </authorList>
    </citation>
    <scope>NUCLEOTIDE SEQUENCE [MRNA] OF 112-643 (ISOFORM 1)</scope>
    <scope>TISSUE SPECIFICITY</scope>
    <source>
        <tissue>Endometrial adenocarcinoma</tissue>
    </source>
</reference>
<reference key="6">
    <citation type="submission" date="2000-11" db="EMBL/GenBank/DDBJ databases">
        <authorList>
            <person name="Tanaka K."/>
            <person name="Imai H."/>
            <person name="Odani T."/>
            <person name="Tachibana M."/>
            <person name="Fujita S."/>
        </authorList>
    </citation>
    <scope>NUCLEOTIDE SEQUENCE [LARGE SCALE MRNA] OF 112-643 (ISOFORM 3)</scope>
    <scope>NUCLEOTIDE SEQUENCE [LARGE SCALE MRNA] OF 143-643 (ISOFORM 2)</scope>
    <scope>VARIANT GLU-511</scope>
    <source>
        <tissue>Leukocyte</tissue>
    </source>
</reference>
<reference key="7">
    <citation type="journal article" date="2010" name="PLoS ONE">
        <title>Themis2/ICB1 is a signaling scaffold that selectively regulates macrophage Toll-like receptor signaling and cytokine production.</title>
        <authorList>
            <person name="Peirce M.J."/>
            <person name="Brook M."/>
            <person name="Morrice N."/>
            <person name="Snelgrove R."/>
            <person name="Begum S."/>
            <person name="Lanfrancotti A."/>
            <person name="Notley C."/>
            <person name="Hussell T."/>
            <person name="Cope A.P."/>
            <person name="Wait R."/>
        </authorList>
    </citation>
    <scope>FUNCTION</scope>
</reference>
<reference key="8">
    <citation type="journal article" date="2013" name="J. Proteome Res.">
        <title>Toward a comprehensive characterization of a human cancer cell phosphoproteome.</title>
        <authorList>
            <person name="Zhou H."/>
            <person name="Di Palma S."/>
            <person name="Preisinger C."/>
            <person name="Peng M."/>
            <person name="Polat A.N."/>
            <person name="Heck A.J."/>
            <person name="Mohammed S."/>
        </authorList>
    </citation>
    <scope>PHOSPHORYLATION [LARGE SCALE ANALYSIS] AT THR-593</scope>
    <scope>IDENTIFICATION BY MASS SPECTROMETRY [LARGE SCALE ANALYSIS]</scope>
    <source>
        <tissue>Erythroleukemia</tissue>
    </source>
</reference>
<evidence type="ECO:0000250" key="1">
    <source>
        <dbReference type="UniProtKB" id="Q91YX0"/>
    </source>
</evidence>
<evidence type="ECO:0000256" key="2">
    <source>
        <dbReference type="SAM" id="MobiDB-lite"/>
    </source>
</evidence>
<evidence type="ECO:0000269" key="3">
    <source>
    </source>
</evidence>
<evidence type="ECO:0000269" key="4">
    <source>
    </source>
</evidence>
<evidence type="ECO:0000269" key="5">
    <source>
    </source>
</evidence>
<evidence type="ECO:0000269" key="6">
    <source ref="6"/>
</evidence>
<evidence type="ECO:0000303" key="7">
    <source>
    </source>
</evidence>
<evidence type="ECO:0000303" key="8">
    <source>
    </source>
</evidence>
<evidence type="ECO:0000303" key="9">
    <source>
    </source>
</evidence>
<evidence type="ECO:0000303" key="10">
    <source>
    </source>
</evidence>
<evidence type="ECO:0000303" key="11">
    <source ref="6"/>
</evidence>
<evidence type="ECO:0000305" key="12"/>
<evidence type="ECO:0000312" key="13">
    <source>
        <dbReference type="HGNC" id="HGNC:16839"/>
    </source>
</evidence>
<evidence type="ECO:0007744" key="14">
    <source>
    </source>
</evidence>
<accession>Q5TEJ8</accession>
<accession>A2RTZ3</accession>
<accession>B4DZT9</accession>
<accession>B4DZY3</accession>
<accession>O60560</accession>
<accession>Q5TEJ1</accession>
<accession>Q5TEJ9</accession>
<accession>Q5TEK1</accession>
<accession>Q68DP4</accession>
<accession>Q9BYB6</accession>
<accession>Q9NS90</accession>
<feature type="chain" id="PRO_0000084143" description="Protein THEMIS2">
    <location>
        <begin position="1"/>
        <end position="643"/>
    </location>
</feature>
<feature type="region of interest" description="CABIT 1">
    <location>
        <begin position="1"/>
        <end position="238"/>
    </location>
</feature>
<feature type="region of interest" description="CABIT 2">
    <location>
        <begin position="239"/>
        <end position="514"/>
    </location>
</feature>
<feature type="region of interest" description="Disordered" evidence="2">
    <location>
        <begin position="546"/>
        <end position="631"/>
    </location>
</feature>
<feature type="compositionally biased region" description="Basic residues" evidence="2">
    <location>
        <begin position="609"/>
        <end position="619"/>
    </location>
</feature>
<feature type="modified residue" description="Phosphothreonine" evidence="14">
    <location>
        <position position="593"/>
    </location>
</feature>
<feature type="modified residue" description="Phosphotyrosine" evidence="1">
    <location>
        <position position="632"/>
    </location>
</feature>
<feature type="splice variant" id="VSP_015328" description="In isoform 4." evidence="9">
    <original>GYFTPLNTPQSYETLEELVSATTQSSKQLPTCFMSTHRIVTEGRV</original>
    <variation>VFSSLRIAATRSAAQTQGEDLARVHQGWLQYVQQDSCPQEGPQAR</variation>
    <location>
        <begin position="79"/>
        <end position="123"/>
    </location>
</feature>
<feature type="splice variant" id="VSP_015329" description="In isoform 4." evidence="9">
    <location>
        <begin position="124"/>
        <end position="643"/>
    </location>
</feature>
<feature type="splice variant" id="VSP_037966" description="In isoform 6." evidence="7">
    <location>
        <begin position="186"/>
        <end position="381"/>
    </location>
</feature>
<feature type="splice variant" id="VSP_015326" description="In isoform 2." evidence="8 11">
    <original>MRRTIVKIPSTLEVDVEDVTASSRHVHFIKPLLLSEVLAWEGPFP</original>
    <variation>IFSSLRIAATRSAAQTQGEDLARVHQGWLQYVQQDSCPQEGPQAR</variation>
    <location>
        <begin position="216"/>
        <end position="260"/>
    </location>
</feature>
<feature type="splice variant" id="VSP_015330" description="In isoform 3." evidence="11">
    <location>
        <begin position="252"/>
        <end position="396"/>
    </location>
</feature>
<feature type="splice variant" id="VSP_015327" description="In isoform 2." evidence="8 11">
    <location>
        <begin position="261"/>
        <end position="643"/>
    </location>
</feature>
<feature type="splice variant" id="VSP_037967" description="In isoform 5." evidence="7">
    <location>
        <begin position="268"/>
        <end position="396"/>
    </location>
</feature>
<feature type="sequence variant" id="VAR_051060" description="In dbSNP:rs35995543.">
    <original>V</original>
    <variation>L</variation>
    <location>
        <position position="431"/>
    </location>
</feature>
<feature type="sequence variant" id="VAR_051061" description="In dbSNP:rs3766400." evidence="3 6">
    <original>K</original>
    <variation>E</variation>
    <location>
        <position position="511"/>
    </location>
</feature>
<feature type="sequence conflict" description="In Ref. 6; AAC16284." evidence="12" ref="6">
    <original>L</original>
    <variation>M</variation>
    <location>
        <position position="451"/>
    </location>
</feature>
<feature type="sequence conflict" description="In Ref. 6; AAC16284." evidence="12" ref="6">
    <original>T</original>
    <variation>N</variation>
    <location>
        <position position="466"/>
    </location>
</feature>
<feature type="sequence conflict" description="In Ref. 6; AAC16284." evidence="12" ref="6">
    <original>W</original>
    <variation>R</variation>
    <location>
        <position position="504"/>
    </location>
</feature>
<feature type="sequence conflict" description="In Ref. 6; AAC16284." evidence="12" ref="6">
    <original>R</original>
    <variation>C</variation>
    <location>
        <position position="538"/>
    </location>
</feature>
<feature type="sequence conflict" description="In Ref. 6; AAC16284." evidence="12" ref="6">
    <original>A</original>
    <variation>V</variation>
    <location>
        <position position="584"/>
    </location>
</feature>